<proteinExistence type="evidence at transcript level"/>
<protein>
    <recommendedName>
        <fullName>Protein PAT1 homolog 1</fullName>
    </recommendedName>
    <alternativeName>
        <fullName>PAT1-like protein 1</fullName>
    </alternativeName>
    <alternativeName>
        <fullName>Protein PAT1 homolog b</fullName>
        <shortName>Pat1b</shortName>
    </alternativeName>
</protein>
<keyword id="KW-0963">Cytoplasm</keyword>
<keyword id="KW-0488">Methylation</keyword>
<keyword id="KW-0539">Nucleus</keyword>
<keyword id="KW-0597">Phosphoprotein</keyword>
<keyword id="KW-1185">Reference proteome</keyword>
<keyword id="KW-0694">RNA-binding</keyword>
<sequence>MFRYESLEDCPLDEDEDAFQGLGEEDEEIDQFNDDTFGSGAVDDDWQEAHERLAELEEKLPVAVNEQTGNGERDEMDLLGDHEENLAERLSKMVIENELEDPAIMRAVQTRPVLQPQPGSLNSSIWDGSEALRRIRGPLLAQEMPTVSVLEYALPQRPPQGPEDDRDLSERALPRRSTSPIIGSPPVRAVPIGTPPKQMAVPSFTQQILCPKPVHVRPPMPPRYPAPYGERMSPNQLCSVPNSSLLGHPFPPSVPPVLSPLQRAQLLGGAQLQPGRMSPSQFARVPGFVGSPLAAMNPKLLQGRVGQMLPPAPGFRAFFSAPPSATPPPQQHPPGPGPHLQNLRSQAPMFRPDTTHLHPQHRRLLHQRQQQNRNQHRNLNGAGDRGSHRSSHQDHLRKDPYANLMLQREKDWVSKIQMMQLQSTDPYLDDFYYQNYFEKLEKLSAAEEIQGDGPKKERTKLITPQVAKLEHTYKPVQFEGSLGKLTVSSVNNPRKMIDAVVTSRSEDDETKEKQVRDKRRKTLVIIEKTYSLLLDVEDYERRYLLSLEEERPALMDERKHKICSMYDNLRGKLPGQERPSDDHFVQIMCIRKGKRMVARILPFLSTEQAADILMTTARNLPFLIKKDAQDEVLPCLLSPFSLLLYHLPSVTITSLLQQLMNLPQSAATPAPSNPHLTAVLQNKFGLSLLLILLSRGEDLQSSDPATESTQNNQWTEVMFMATRELLRIPQAALAKPISIPTNLVSLFSRYVDRQKLNLLETKLQLVQGIR</sequence>
<evidence type="ECO:0000250" key="1"/>
<evidence type="ECO:0000250" key="2">
    <source>
        <dbReference type="UniProtKB" id="Q3TC46"/>
    </source>
</evidence>
<evidence type="ECO:0000250" key="3">
    <source>
        <dbReference type="UniProtKB" id="Q86TB9"/>
    </source>
</evidence>
<evidence type="ECO:0000256" key="4">
    <source>
        <dbReference type="SAM" id="MobiDB-lite"/>
    </source>
</evidence>
<evidence type="ECO:0000305" key="5"/>
<feature type="chain" id="PRO_0000320965" description="Protein PAT1 homolog 1">
    <location>
        <begin position="1"/>
        <end position="770"/>
    </location>
</feature>
<feature type="region of interest" description="Involved in nuclear foci localization" evidence="1">
    <location>
        <begin position="1"/>
        <end position="397"/>
    </location>
</feature>
<feature type="region of interest" description="Region A; interaction with DDX6/RCK" evidence="1">
    <location>
        <begin position="1"/>
        <end position="84"/>
    </location>
</feature>
<feature type="region of interest" description="Disordered" evidence="4">
    <location>
        <begin position="1"/>
        <end position="26"/>
    </location>
</feature>
<feature type="region of interest" description="Region N; interaction with decapping machinery" evidence="1">
    <location>
        <begin position="85"/>
        <end position="388"/>
    </location>
</feature>
<feature type="region of interest" description="Involved in RNA-binding" evidence="1">
    <location>
        <begin position="223"/>
        <end position="397"/>
    </location>
</feature>
<feature type="region of interest" description="Disordered" evidence="4">
    <location>
        <begin position="315"/>
        <end position="344"/>
    </location>
</feature>
<feature type="region of interest" description="Disordered" evidence="4">
    <location>
        <begin position="360"/>
        <end position="400"/>
    </location>
</feature>
<feature type="region of interest" description="Region H" evidence="1">
    <location>
        <begin position="389"/>
        <end position="448"/>
    </location>
</feature>
<feature type="region of interest" description="Involved in nuclear speckle localization" evidence="1">
    <location>
        <begin position="398"/>
        <end position="770"/>
    </location>
</feature>
<feature type="region of interest" description="Region C" evidence="1">
    <location>
        <begin position="449"/>
        <end position="770"/>
    </location>
</feature>
<feature type="short sequence motif" description="Nuclear export signal" evidence="1">
    <location>
        <begin position="86"/>
        <end position="95"/>
    </location>
</feature>
<feature type="compositionally biased region" description="Acidic residues" evidence="4">
    <location>
        <begin position="7"/>
        <end position="26"/>
    </location>
</feature>
<feature type="compositionally biased region" description="Pro residues" evidence="4">
    <location>
        <begin position="324"/>
        <end position="337"/>
    </location>
</feature>
<feature type="compositionally biased region" description="Low complexity" evidence="4">
    <location>
        <begin position="367"/>
        <end position="380"/>
    </location>
</feature>
<feature type="compositionally biased region" description="Basic and acidic residues" evidence="4">
    <location>
        <begin position="385"/>
        <end position="400"/>
    </location>
</feature>
<feature type="modified residue" description="Phosphoserine" evidence="3">
    <location>
        <position position="177"/>
    </location>
</feature>
<feature type="modified residue" description="Phosphothreonine" evidence="2">
    <location>
        <position position="178"/>
    </location>
</feature>
<feature type="modified residue" description="Phosphoserine" evidence="3">
    <location>
        <position position="179"/>
    </location>
</feature>
<feature type="modified residue" description="Phosphoserine" evidence="3">
    <location>
        <position position="184"/>
    </location>
</feature>
<feature type="modified residue" description="Phosphothreonine" evidence="3">
    <location>
        <position position="194"/>
    </location>
</feature>
<feature type="modified residue" description="Asymmetric dimethylarginine" evidence="3">
    <location>
        <position position="217"/>
    </location>
</feature>
<feature type="modified residue" description="Asymmetric dimethylarginine" evidence="3">
    <location>
        <position position="223"/>
    </location>
</feature>
<feature type="modified residue" description="Asymmetric dimethylarginine" evidence="3">
    <location>
        <position position="263"/>
    </location>
</feature>
<feature type="modified residue" description="Phosphoserine" evidence="3">
    <location>
        <position position="278"/>
    </location>
</feature>
<feature type="modified residue" description="Asymmetric dimethylarginine" evidence="2">
    <location>
        <position position="284"/>
    </location>
</feature>
<feature type="modified residue" description="Omega-N-methylarginine" evidence="2">
    <location>
        <position position="385"/>
    </location>
</feature>
<gene>
    <name type="primary">PATL1</name>
</gene>
<dbReference type="EMBL" id="CR859697">
    <property type="protein sequence ID" value="CAH91856.1"/>
    <property type="molecule type" value="mRNA"/>
</dbReference>
<dbReference type="RefSeq" id="NP_001126075.1">
    <property type="nucleotide sequence ID" value="NM_001132603.1"/>
</dbReference>
<dbReference type="SMR" id="Q5R8Q4"/>
<dbReference type="FunCoup" id="Q5R8Q4">
    <property type="interactions" value="2051"/>
</dbReference>
<dbReference type="STRING" id="9601.ENSPPYP00000003720"/>
<dbReference type="GeneID" id="100173027"/>
<dbReference type="KEGG" id="pon:100173027"/>
<dbReference type="CTD" id="219988"/>
<dbReference type="eggNOG" id="KOG4592">
    <property type="taxonomic scope" value="Eukaryota"/>
</dbReference>
<dbReference type="InParanoid" id="Q5R8Q4"/>
<dbReference type="OrthoDB" id="74835at2759"/>
<dbReference type="Proteomes" id="UP000001595">
    <property type="component" value="Unplaced"/>
</dbReference>
<dbReference type="GO" id="GO:0016607">
    <property type="term" value="C:nuclear speck"/>
    <property type="evidence" value="ECO:0007669"/>
    <property type="project" value="UniProtKB-SubCell"/>
</dbReference>
<dbReference type="GO" id="GO:0000932">
    <property type="term" value="C:P-body"/>
    <property type="evidence" value="ECO:0000250"/>
    <property type="project" value="UniProtKB"/>
</dbReference>
<dbReference type="GO" id="GO:0016605">
    <property type="term" value="C:PML body"/>
    <property type="evidence" value="ECO:0007669"/>
    <property type="project" value="UniProtKB-SubCell"/>
</dbReference>
<dbReference type="GO" id="GO:0003723">
    <property type="term" value="F:RNA binding"/>
    <property type="evidence" value="ECO:0000250"/>
    <property type="project" value="UniProtKB"/>
</dbReference>
<dbReference type="GO" id="GO:0000290">
    <property type="term" value="P:deadenylation-dependent decapping of nuclear-transcribed mRNA"/>
    <property type="evidence" value="ECO:0000250"/>
    <property type="project" value="UniProtKB"/>
</dbReference>
<dbReference type="GO" id="GO:0033962">
    <property type="term" value="P:P-body assembly"/>
    <property type="evidence" value="ECO:0000250"/>
    <property type="project" value="UniProtKB"/>
</dbReference>
<dbReference type="InterPro" id="IPR039900">
    <property type="entry name" value="Pat1-like"/>
</dbReference>
<dbReference type="InterPro" id="IPR019167">
    <property type="entry name" value="PAT1_dom"/>
</dbReference>
<dbReference type="PANTHER" id="PTHR21551:SF2">
    <property type="entry name" value="PROTEIN PAT1 HOMOLOG 1"/>
    <property type="match status" value="1"/>
</dbReference>
<dbReference type="PANTHER" id="PTHR21551">
    <property type="entry name" value="TOPOISOMERASE II-ASSOCIATED PROTEIN PAT1"/>
    <property type="match status" value="1"/>
</dbReference>
<dbReference type="Pfam" id="PF09770">
    <property type="entry name" value="PAT1"/>
    <property type="match status" value="1"/>
</dbReference>
<comment type="function">
    <text evidence="3">RNA-binding protein involved in deadenylation-dependent decapping of mRNAs, leading to the degradation of mRNAs. Acts as a scaffold protein that connects deadenylation and decapping machinery. Required for cytoplasmic mRNA processing body (P-body) assembly.</text>
</comment>
<comment type="subunit">
    <text evidence="3">Interacts (via region A) with DDX6/RCK. Interacts (via region H and region C) with LSM1 and LSM4. Interacts (via region N) with DCP1A, DCP2, EDC3, EDC4 and XRN1. Interacts with the CCR4-NOT complex. Interacts with the Lsm-containing SMN-Sm protein complex. Interacts with EIF4ENIF1/4E-T.</text>
</comment>
<comment type="subcellular location">
    <subcellularLocation>
        <location evidence="3">Cytoplasm</location>
        <location evidence="3">P-body</location>
    </subcellularLocation>
    <subcellularLocation>
        <location evidence="3">Nucleus</location>
    </subcellularLocation>
    <subcellularLocation>
        <location evidence="3">Nucleus</location>
        <location evidence="3">PML body</location>
    </subcellularLocation>
    <subcellularLocation>
        <location evidence="3">Nucleus speckle</location>
    </subcellularLocation>
    <text evidence="3">Predominantly cytoplasmic. Shuttles between the nucleus and the cytoplasm in a CRM1-dependent manner. Enriched in splicing speckles. Localization to nuclear foci and speckles requires active transcription. Excluded from the nucleolus.</text>
</comment>
<comment type="domain">
    <text evidence="1">The region C, also named Pat-C, is required for RNA-binding and mediates the binding with the Lsm-containing SMN-Sm protein complex and the decapping machinery. It folds into an alpha-alpha superhelix, exposing conserved and basic residues on one side of the domain.</text>
</comment>
<comment type="similarity">
    <text evidence="5">Belongs to the PAT1 family.</text>
</comment>
<name>PATL1_PONAB</name>
<reference key="1">
    <citation type="submission" date="2004-11" db="EMBL/GenBank/DDBJ databases">
        <authorList>
            <consortium name="The German cDNA consortium"/>
        </authorList>
    </citation>
    <scope>NUCLEOTIDE SEQUENCE [LARGE SCALE MRNA]</scope>
    <source>
        <tissue>Heart</tissue>
    </source>
</reference>
<organism>
    <name type="scientific">Pongo abelii</name>
    <name type="common">Sumatran orangutan</name>
    <name type="synonym">Pongo pygmaeus abelii</name>
    <dbReference type="NCBI Taxonomy" id="9601"/>
    <lineage>
        <taxon>Eukaryota</taxon>
        <taxon>Metazoa</taxon>
        <taxon>Chordata</taxon>
        <taxon>Craniata</taxon>
        <taxon>Vertebrata</taxon>
        <taxon>Euteleostomi</taxon>
        <taxon>Mammalia</taxon>
        <taxon>Eutheria</taxon>
        <taxon>Euarchontoglires</taxon>
        <taxon>Primates</taxon>
        <taxon>Haplorrhini</taxon>
        <taxon>Catarrhini</taxon>
        <taxon>Hominidae</taxon>
        <taxon>Pongo</taxon>
    </lineage>
</organism>
<accession>Q5R8Q4</accession>